<keyword id="KW-0030">Aminoacyl-tRNA synthetase</keyword>
<keyword id="KW-0067">ATP-binding</keyword>
<keyword id="KW-0436">Ligase</keyword>
<keyword id="KW-0547">Nucleotide-binding</keyword>
<keyword id="KW-0648">Protein biosynthesis</keyword>
<keyword id="KW-1185">Reference proteome</keyword>
<name>SYQ_CAEEL</name>
<organism>
    <name type="scientific">Caenorhabditis elegans</name>
    <dbReference type="NCBI Taxonomy" id="6239"/>
    <lineage>
        <taxon>Eukaryota</taxon>
        <taxon>Metazoa</taxon>
        <taxon>Ecdysozoa</taxon>
        <taxon>Nematoda</taxon>
        <taxon>Chromadorea</taxon>
        <taxon>Rhabditida</taxon>
        <taxon>Rhabditina</taxon>
        <taxon>Rhabditomorpha</taxon>
        <taxon>Rhabditoidea</taxon>
        <taxon>Rhabditidae</taxon>
        <taxon>Peloderinae</taxon>
        <taxon>Caenorhabditis</taxon>
    </lineage>
</organism>
<reference key="1">
    <citation type="journal article" date="1998" name="Science">
        <title>Genome sequence of the nematode C. elegans: a platform for investigating biology.</title>
        <authorList>
            <consortium name="The C. elegans sequencing consortium"/>
        </authorList>
    </citation>
    <scope>NUCLEOTIDE SEQUENCE [LARGE SCALE GENOMIC DNA]</scope>
    <source>
        <strain>Bristol N2</strain>
    </source>
</reference>
<sequence>MATKEELLSLGLSDSKVAETLKNVKLTETIGSIVKLASESGEISKQKGTLLYQLATKLKPQVAAHTPLVVKYIMNDGIKTEPQLSAAIEYLLSHTVKGIQVPDFEKSCGVGVVVTIDDIEAAVTKVIGQHREKIVAERYSFPAGKLLGELRALLPWADGAITKKEVDLRFLELLGPKTAEDLAPKKKEKKPEGPKPSKDAAAAATAPGTKNQKEASPEEFADGAETMDELLRTRAHFHKVGENFKQDGYVTTPKTAELLKAHVAAVGGKVVTRFPPEPNGVLHIGHAKAININFGYAKAMGGVCNLRFDDTNPEKEEEKFFSAIEDIVHWLGYDPARVTHSSDNFQQLYLWAVKLIQKGLAFVCHQKVEEMRGFEVQLSPWRERPIEENIQLFEDMKNGKFDEGEATLRLKLTLEEGKVDPVAYRIKYVPHHRTGNQWCIYPTYDYTHCLCDSIENITHSLCTKEFQSRRSSYYWLCNALDIYCPVQWEYGRLNVNYTVVSKRKILKLITTKTVNDWDDPRLFTLTALRRRGIPSEAINRFVAKLGLTMSQMVIDPHVLDATVRDYLNIHAPRTMAVLEGLKLTIENFSELNLPSSVDVPDFPSDPTDPRKHSVSVDREIFIEKSDYKPDDSDKSFRRLTPKQAVGLKHIGLVLRFVKEVKDAEGHVTEVVVKAEKLSEKDKPKAFIHWVAKPVSCEVRLYDRLFKSKNPEDAQLVPGGFLSDINPDSLTVVYNALIDQSIAKSKVYDRFQFERIGFFCVDRDSTSSTLVFNRTVMLKDGGASGKN</sequence>
<protein>
    <recommendedName>
        <fullName>Probable glutamine--tRNA ligase</fullName>
        <ecNumber evidence="2">6.1.1.18</ecNumber>
    </recommendedName>
    <alternativeName>
        <fullName>Glutaminyl-tRNA synthetase</fullName>
        <shortName>GlnRS</shortName>
    </alternativeName>
</protein>
<proteinExistence type="inferred from homology"/>
<evidence type="ECO:0000250" key="1">
    <source>
        <dbReference type="UniProtKB" id="P00962"/>
    </source>
</evidence>
<evidence type="ECO:0000250" key="2">
    <source>
        <dbReference type="UniProtKB" id="P47897"/>
    </source>
</evidence>
<evidence type="ECO:0000256" key="3">
    <source>
        <dbReference type="SAM" id="MobiDB-lite"/>
    </source>
</evidence>
<evidence type="ECO:0000305" key="4"/>
<evidence type="ECO:0000312" key="5">
    <source>
        <dbReference type="WormBase" id="Y41E3.4a"/>
    </source>
</evidence>
<comment type="catalytic activity">
    <reaction evidence="2">
        <text>tRNA(Gln) + L-glutamine + ATP = L-glutaminyl-tRNA(Gln) + AMP + diphosphate</text>
        <dbReference type="Rhea" id="RHEA:20121"/>
        <dbReference type="Rhea" id="RHEA-COMP:9662"/>
        <dbReference type="Rhea" id="RHEA-COMP:9681"/>
        <dbReference type="ChEBI" id="CHEBI:30616"/>
        <dbReference type="ChEBI" id="CHEBI:33019"/>
        <dbReference type="ChEBI" id="CHEBI:58359"/>
        <dbReference type="ChEBI" id="CHEBI:78442"/>
        <dbReference type="ChEBI" id="CHEBI:78521"/>
        <dbReference type="ChEBI" id="CHEBI:456215"/>
        <dbReference type="EC" id="6.1.1.18"/>
    </reaction>
</comment>
<comment type="similarity">
    <text evidence="4">Belongs to the class-I aminoacyl-tRNA synthetase family.</text>
</comment>
<gene>
    <name evidence="5" type="primary">qars-1</name>
    <name evidence="5" type="synonym">ers-1</name>
    <name evidence="5" type="synonym">qrs-5</name>
    <name evidence="5" type="ORF">Y41E3.4</name>
</gene>
<feature type="chain" id="PRO_0000195861" description="Probable glutamine--tRNA ligase">
    <location>
        <begin position="1"/>
        <end position="786"/>
    </location>
</feature>
<feature type="region of interest" description="Disordered" evidence="3">
    <location>
        <begin position="181"/>
        <end position="218"/>
    </location>
</feature>
<feature type="short sequence motif" description="'HIGH' region">
    <location>
        <begin position="276"/>
        <end position="286"/>
    </location>
</feature>
<feature type="short sequence motif" description="'KMSKS' region">
    <location>
        <begin position="499"/>
        <end position="503"/>
    </location>
</feature>
<feature type="compositionally biased region" description="Basic and acidic residues" evidence="3">
    <location>
        <begin position="181"/>
        <end position="198"/>
    </location>
</feature>
<feature type="binding site" evidence="1">
    <location>
        <begin position="277"/>
        <end position="279"/>
    </location>
    <ligand>
        <name>ATP</name>
        <dbReference type="ChEBI" id="CHEBI:30616"/>
    </ligand>
</feature>
<feature type="binding site" evidence="1">
    <location>
        <begin position="283"/>
        <end position="289"/>
    </location>
    <ligand>
        <name>ATP</name>
        <dbReference type="ChEBI" id="CHEBI:30616"/>
    </ligand>
</feature>
<feature type="binding site" evidence="1">
    <location>
        <position position="309"/>
    </location>
    <ligand>
        <name>L-glutamine</name>
        <dbReference type="ChEBI" id="CHEBI:58359"/>
    </ligand>
</feature>
<feature type="binding site" evidence="1">
    <location>
        <position position="444"/>
    </location>
    <ligand>
        <name>L-glutamine</name>
        <dbReference type="ChEBI" id="CHEBI:58359"/>
    </ligand>
</feature>
<feature type="binding site" evidence="1">
    <location>
        <position position="463"/>
    </location>
    <ligand>
        <name>ATP</name>
        <dbReference type="ChEBI" id="CHEBI:30616"/>
    </ligand>
</feature>
<feature type="binding site" evidence="1">
    <location>
        <begin position="492"/>
        <end position="493"/>
    </location>
    <ligand>
        <name>ATP</name>
        <dbReference type="ChEBI" id="CHEBI:30616"/>
    </ligand>
</feature>
<feature type="binding site" evidence="1">
    <location>
        <begin position="500"/>
        <end position="502"/>
    </location>
    <ligand>
        <name>ATP</name>
        <dbReference type="ChEBI" id="CHEBI:30616"/>
    </ligand>
</feature>
<accession>O62431</accession>
<dbReference type="EC" id="6.1.1.18" evidence="2"/>
<dbReference type="EMBL" id="Z95559">
    <property type="protein sequence ID" value="CAB08998.1"/>
    <property type="molecule type" value="Genomic_DNA"/>
</dbReference>
<dbReference type="PIR" id="T26811">
    <property type="entry name" value="T26811"/>
</dbReference>
<dbReference type="RefSeq" id="NP_001255843.1">
    <property type="nucleotide sequence ID" value="NM_001268914.5"/>
</dbReference>
<dbReference type="SMR" id="O62431"/>
<dbReference type="BioGRID" id="43497">
    <property type="interactions" value="16"/>
</dbReference>
<dbReference type="FunCoup" id="O62431">
    <property type="interactions" value="2969"/>
</dbReference>
<dbReference type="STRING" id="6239.Y41E3.4a.1"/>
<dbReference type="iPTMnet" id="O62431"/>
<dbReference type="PaxDb" id="6239-Y41E3.4a"/>
<dbReference type="PeptideAtlas" id="O62431"/>
<dbReference type="EnsemblMetazoa" id="Y41E3.4a.1">
    <property type="protein sequence ID" value="Y41E3.4a.1"/>
    <property type="gene ID" value="WBGene00001336"/>
</dbReference>
<dbReference type="GeneID" id="178415"/>
<dbReference type="KEGG" id="cel:CELE_Y41E3.4"/>
<dbReference type="UCSC" id="Y41E3.4">
    <property type="organism name" value="c. elegans"/>
</dbReference>
<dbReference type="AGR" id="WB:WBGene00001336"/>
<dbReference type="CTD" id="178415"/>
<dbReference type="WormBase" id="Y41E3.4a">
    <property type="protein sequence ID" value="CE18372"/>
    <property type="gene ID" value="WBGene00001336"/>
    <property type="gene designation" value="qars-1"/>
</dbReference>
<dbReference type="eggNOG" id="KOG1148">
    <property type="taxonomic scope" value="Eukaryota"/>
</dbReference>
<dbReference type="GeneTree" id="ENSGT00940000168831"/>
<dbReference type="InParanoid" id="O62431"/>
<dbReference type="OMA" id="TWCIYPM"/>
<dbReference type="OrthoDB" id="10250478at2759"/>
<dbReference type="PhylomeDB" id="O62431"/>
<dbReference type="PRO" id="PR:O62431"/>
<dbReference type="Proteomes" id="UP000001940">
    <property type="component" value="Chromosome IV"/>
</dbReference>
<dbReference type="Bgee" id="WBGene00001336">
    <property type="expression patterns" value="Expressed in germ line (C elegans) and 4 other cell types or tissues"/>
</dbReference>
<dbReference type="ExpressionAtlas" id="O62431">
    <property type="expression patterns" value="baseline and differential"/>
</dbReference>
<dbReference type="GO" id="GO:0017101">
    <property type="term" value="C:aminoacyl-tRNA synthetase multienzyme complex"/>
    <property type="evidence" value="ECO:0000318"/>
    <property type="project" value="GO_Central"/>
</dbReference>
<dbReference type="GO" id="GO:0005829">
    <property type="term" value="C:cytosol"/>
    <property type="evidence" value="ECO:0000318"/>
    <property type="project" value="GO_Central"/>
</dbReference>
<dbReference type="GO" id="GO:0005524">
    <property type="term" value="F:ATP binding"/>
    <property type="evidence" value="ECO:0007669"/>
    <property type="project" value="UniProtKB-KW"/>
</dbReference>
<dbReference type="GO" id="GO:0004819">
    <property type="term" value="F:glutamine-tRNA ligase activity"/>
    <property type="evidence" value="ECO:0000318"/>
    <property type="project" value="GO_Central"/>
</dbReference>
<dbReference type="GO" id="GO:0006425">
    <property type="term" value="P:glutaminyl-tRNA aminoacylation"/>
    <property type="evidence" value="ECO:0000318"/>
    <property type="project" value="GO_Central"/>
</dbReference>
<dbReference type="CDD" id="cd00807">
    <property type="entry name" value="GlnRS_core"/>
    <property type="match status" value="1"/>
</dbReference>
<dbReference type="FunFam" id="1.10.1160.10:FF:000001">
    <property type="entry name" value="Glutamine--tRNA ligase"/>
    <property type="match status" value="1"/>
</dbReference>
<dbReference type="FunFam" id="2.40.240.10:FF:000007">
    <property type="entry name" value="Glutamine--tRNA ligase"/>
    <property type="match status" value="1"/>
</dbReference>
<dbReference type="FunFam" id="3.90.800.10:FF:000001">
    <property type="entry name" value="Glutamine--tRNA ligase"/>
    <property type="match status" value="1"/>
</dbReference>
<dbReference type="FunFam" id="1.10.10.2420:FF:000001">
    <property type="entry name" value="Glutamine--tRNA ligase cytoplasmic"/>
    <property type="match status" value="1"/>
</dbReference>
<dbReference type="FunFam" id="1.10.8.1290:FF:000002">
    <property type="entry name" value="Glutamine--tRNA ligase cytoplasmic"/>
    <property type="match status" value="1"/>
</dbReference>
<dbReference type="FunFam" id="3.40.50.620:FF:000037">
    <property type="entry name" value="Glutamine--tRNA ligase cytoplasmic"/>
    <property type="match status" value="1"/>
</dbReference>
<dbReference type="FunFam" id="2.40.240.10:FF:000008">
    <property type="entry name" value="probable glutamine--tRNA ligase"/>
    <property type="match status" value="1"/>
</dbReference>
<dbReference type="Gene3D" id="1.10.10.2420">
    <property type="match status" value="1"/>
</dbReference>
<dbReference type="Gene3D" id="1.10.8.1290">
    <property type="entry name" value="Glutaminyl-tRNA synthetase, non-specific RNA binding region part 1, domain 1"/>
    <property type="match status" value="1"/>
</dbReference>
<dbReference type="Gene3D" id="3.40.50.620">
    <property type="entry name" value="HUPs"/>
    <property type="match status" value="1"/>
</dbReference>
<dbReference type="Gene3D" id="2.40.240.10">
    <property type="entry name" value="Ribosomal Protein L25, Chain P"/>
    <property type="match status" value="2"/>
</dbReference>
<dbReference type="InterPro" id="IPR001412">
    <property type="entry name" value="aa-tRNA-synth_I_CS"/>
</dbReference>
<dbReference type="InterPro" id="IPR004514">
    <property type="entry name" value="Gln-tRNA-synth"/>
</dbReference>
<dbReference type="InterPro" id="IPR007638">
    <property type="entry name" value="Gln-tRNA-synth_Ib_RNA-bd_2"/>
</dbReference>
<dbReference type="InterPro" id="IPR007639">
    <property type="entry name" value="Gln-tRNA-synth_Ib_RNA-bd_N"/>
</dbReference>
<dbReference type="InterPro" id="IPR042558">
    <property type="entry name" value="Gln-tRNA-synth_Ib_RNA-bd_N_1"/>
</dbReference>
<dbReference type="InterPro" id="IPR042559">
    <property type="entry name" value="Gln-tRNA-synth_Ib_RNA-bd_N_2"/>
</dbReference>
<dbReference type="InterPro" id="IPR050132">
    <property type="entry name" value="Gln/Glu-tRNA_Ligase"/>
</dbReference>
<dbReference type="InterPro" id="IPR000924">
    <property type="entry name" value="Glu/Gln-tRNA-synth"/>
</dbReference>
<dbReference type="InterPro" id="IPR020058">
    <property type="entry name" value="Glu/Gln-tRNA-synth_Ib_cat-dom"/>
</dbReference>
<dbReference type="InterPro" id="IPR020059">
    <property type="entry name" value="Glu/Gln-tRNA-synth_Ib_codon-bd"/>
</dbReference>
<dbReference type="InterPro" id="IPR020056">
    <property type="entry name" value="Rbsml_bL25/Gln-tRNA_synth_N"/>
</dbReference>
<dbReference type="InterPro" id="IPR011035">
    <property type="entry name" value="Ribosomal_bL25/Gln-tRNA_synth"/>
</dbReference>
<dbReference type="InterPro" id="IPR014729">
    <property type="entry name" value="Rossmann-like_a/b/a_fold"/>
</dbReference>
<dbReference type="InterPro" id="IPR049437">
    <property type="entry name" value="tRNA-synt_1c_C2"/>
</dbReference>
<dbReference type="NCBIfam" id="TIGR00440">
    <property type="entry name" value="glnS"/>
    <property type="match status" value="1"/>
</dbReference>
<dbReference type="PANTHER" id="PTHR43097:SF4">
    <property type="entry name" value="GLUTAMINE--TRNA LIGASE"/>
    <property type="match status" value="1"/>
</dbReference>
<dbReference type="PANTHER" id="PTHR43097">
    <property type="entry name" value="GLUTAMINE-TRNA LIGASE"/>
    <property type="match status" value="1"/>
</dbReference>
<dbReference type="Pfam" id="PF00749">
    <property type="entry name" value="tRNA-synt_1c"/>
    <property type="match status" value="1"/>
</dbReference>
<dbReference type="Pfam" id="PF03950">
    <property type="entry name" value="tRNA-synt_1c_C"/>
    <property type="match status" value="1"/>
</dbReference>
<dbReference type="Pfam" id="PF20974">
    <property type="entry name" value="tRNA-synt_1c_C2"/>
    <property type="match status" value="1"/>
</dbReference>
<dbReference type="Pfam" id="PF04558">
    <property type="entry name" value="tRNA_synt_1c_R1"/>
    <property type="match status" value="1"/>
</dbReference>
<dbReference type="Pfam" id="PF04557">
    <property type="entry name" value="tRNA_synt_1c_R2"/>
    <property type="match status" value="1"/>
</dbReference>
<dbReference type="PRINTS" id="PR00987">
    <property type="entry name" value="TRNASYNTHGLU"/>
</dbReference>
<dbReference type="SUPFAM" id="SSF52374">
    <property type="entry name" value="Nucleotidylyl transferase"/>
    <property type="match status" value="1"/>
</dbReference>
<dbReference type="SUPFAM" id="SSF50715">
    <property type="entry name" value="Ribosomal protein L25-like"/>
    <property type="match status" value="1"/>
</dbReference>
<dbReference type="PROSITE" id="PS00178">
    <property type="entry name" value="AA_TRNA_LIGASE_I"/>
    <property type="match status" value="1"/>
</dbReference>